<protein>
    <recommendedName>
        <fullName evidence="1">Glutamate-1-semialdehyde 2,1-aminomutase 2</fullName>
        <shortName evidence="1">GSA 2</shortName>
        <ecNumber evidence="1">5.4.3.8</ecNumber>
    </recommendedName>
    <alternativeName>
        <fullName evidence="1">Glutamate-1-semialdehyde aminotransferase 2</fullName>
        <shortName evidence="1">GSA-AT 2</shortName>
    </alternativeName>
</protein>
<dbReference type="EC" id="5.4.3.8" evidence="1"/>
<dbReference type="EMBL" id="AL596170">
    <property type="protein sequence ID" value="CAC97024.1"/>
    <property type="molecule type" value="Genomic_DNA"/>
</dbReference>
<dbReference type="PIR" id="AH1656">
    <property type="entry name" value="AH1656"/>
</dbReference>
<dbReference type="RefSeq" id="WP_010990959.1">
    <property type="nucleotide sequence ID" value="NC_003212.1"/>
</dbReference>
<dbReference type="SMR" id="Q92AX5"/>
<dbReference type="STRING" id="272626.gene:17566148"/>
<dbReference type="KEGG" id="lin:gsaB"/>
<dbReference type="eggNOG" id="COG0001">
    <property type="taxonomic scope" value="Bacteria"/>
</dbReference>
<dbReference type="HOGENOM" id="CLU_016922_1_5_9"/>
<dbReference type="OrthoDB" id="9807885at2"/>
<dbReference type="UniPathway" id="UPA00251">
    <property type="reaction ID" value="UER00317"/>
</dbReference>
<dbReference type="Proteomes" id="UP000002513">
    <property type="component" value="Chromosome"/>
</dbReference>
<dbReference type="GO" id="GO:0005737">
    <property type="term" value="C:cytoplasm"/>
    <property type="evidence" value="ECO:0007669"/>
    <property type="project" value="UniProtKB-SubCell"/>
</dbReference>
<dbReference type="GO" id="GO:0042286">
    <property type="term" value="F:glutamate-1-semialdehyde 2,1-aminomutase activity"/>
    <property type="evidence" value="ECO:0007669"/>
    <property type="project" value="UniProtKB-UniRule"/>
</dbReference>
<dbReference type="GO" id="GO:0030170">
    <property type="term" value="F:pyridoxal phosphate binding"/>
    <property type="evidence" value="ECO:0007669"/>
    <property type="project" value="InterPro"/>
</dbReference>
<dbReference type="GO" id="GO:0008483">
    <property type="term" value="F:transaminase activity"/>
    <property type="evidence" value="ECO:0007669"/>
    <property type="project" value="InterPro"/>
</dbReference>
<dbReference type="GO" id="GO:0006782">
    <property type="term" value="P:protoporphyrinogen IX biosynthetic process"/>
    <property type="evidence" value="ECO:0007669"/>
    <property type="project" value="UniProtKB-UniRule"/>
</dbReference>
<dbReference type="CDD" id="cd00610">
    <property type="entry name" value="OAT_like"/>
    <property type="match status" value="1"/>
</dbReference>
<dbReference type="FunFam" id="3.40.640.10:FF:000021">
    <property type="entry name" value="Glutamate-1-semialdehyde 2,1-aminomutase"/>
    <property type="match status" value="1"/>
</dbReference>
<dbReference type="Gene3D" id="3.90.1150.10">
    <property type="entry name" value="Aspartate Aminotransferase, domain 1"/>
    <property type="match status" value="1"/>
</dbReference>
<dbReference type="Gene3D" id="3.40.640.10">
    <property type="entry name" value="Type I PLP-dependent aspartate aminotransferase-like (Major domain)"/>
    <property type="match status" value="1"/>
</dbReference>
<dbReference type="HAMAP" id="MF_00375">
    <property type="entry name" value="HemL_aminotrans_3"/>
    <property type="match status" value="1"/>
</dbReference>
<dbReference type="InterPro" id="IPR004639">
    <property type="entry name" value="4pyrrol_synth_GluAld_NH2Trfase"/>
</dbReference>
<dbReference type="InterPro" id="IPR005814">
    <property type="entry name" value="Aminotrans_3"/>
</dbReference>
<dbReference type="InterPro" id="IPR049704">
    <property type="entry name" value="Aminotrans_3_PPA_site"/>
</dbReference>
<dbReference type="InterPro" id="IPR015424">
    <property type="entry name" value="PyrdxlP-dep_Trfase"/>
</dbReference>
<dbReference type="InterPro" id="IPR015421">
    <property type="entry name" value="PyrdxlP-dep_Trfase_major"/>
</dbReference>
<dbReference type="InterPro" id="IPR015422">
    <property type="entry name" value="PyrdxlP-dep_Trfase_small"/>
</dbReference>
<dbReference type="NCBIfam" id="TIGR00713">
    <property type="entry name" value="hemL"/>
    <property type="match status" value="1"/>
</dbReference>
<dbReference type="NCBIfam" id="NF000818">
    <property type="entry name" value="PRK00062.1"/>
    <property type="match status" value="1"/>
</dbReference>
<dbReference type="NCBIfam" id="NF009055">
    <property type="entry name" value="PRK12389.1"/>
    <property type="match status" value="1"/>
</dbReference>
<dbReference type="PANTHER" id="PTHR43713">
    <property type="entry name" value="GLUTAMATE-1-SEMIALDEHYDE 2,1-AMINOMUTASE"/>
    <property type="match status" value="1"/>
</dbReference>
<dbReference type="PANTHER" id="PTHR43713:SF1">
    <property type="entry name" value="GLUTAMATE-1-SEMIALDEHYDE 2,1-AMINOMUTASE 2"/>
    <property type="match status" value="1"/>
</dbReference>
<dbReference type="Pfam" id="PF00202">
    <property type="entry name" value="Aminotran_3"/>
    <property type="match status" value="1"/>
</dbReference>
<dbReference type="SUPFAM" id="SSF53383">
    <property type="entry name" value="PLP-dependent transferases"/>
    <property type="match status" value="1"/>
</dbReference>
<dbReference type="PROSITE" id="PS00600">
    <property type="entry name" value="AA_TRANSFER_CLASS_3"/>
    <property type="match status" value="1"/>
</dbReference>
<keyword id="KW-0963">Cytoplasm</keyword>
<keyword id="KW-0413">Isomerase</keyword>
<keyword id="KW-0627">Porphyrin biosynthesis</keyword>
<keyword id="KW-0663">Pyridoxal phosphate</keyword>
<sequence length="432" mass="46009">MDHSMSKKLHDEALLHIVGGVNSPSRSNKGVGGGIPVTMERANGAYFYDVDGNKYIDYLAAFGPIITGHAHPHITEAITKAAQNGVLYGTPTKHEITFAKMLKEAIPSLEKVRFTNSGTEAVMTTIRVARAYTGRDKIIKFAGCYHGHFDLVLVEAGSGPSTLGIPDSAGVTRSTAEEVITVPFNDLTSFKEALAVWGDQVAAVLVEPIVGNFGMVAPAEGFLEAVNELAHENGSLVIYDEVITAFRFMYGGAQNYLGVIPDLTAMGKIIGGGLPIGAYGGRVDIMEKVAPLGPAYQAGTHAGNPASILSGIACLEVLQEEGLYDRFEKYGSMLKEGIEKAAIKHGIAVTVNQIVGALTVYFTDEPVTNYAEAGATNGDLFGRFFKGMLEEGINLAPSKYEAWFITSAHSEADILETIQAVDTVFGKLVQGK</sequence>
<evidence type="ECO:0000255" key="1">
    <source>
        <dbReference type="HAMAP-Rule" id="MF_00375"/>
    </source>
</evidence>
<name>GSA2_LISIN</name>
<gene>
    <name evidence="1" type="primary">hemL2</name>
    <name type="synonym">gsaB</name>
    <name type="ordered locus">lin1793</name>
</gene>
<reference key="1">
    <citation type="journal article" date="2001" name="Science">
        <title>Comparative genomics of Listeria species.</title>
        <authorList>
            <person name="Glaser P."/>
            <person name="Frangeul L."/>
            <person name="Buchrieser C."/>
            <person name="Rusniok C."/>
            <person name="Amend A."/>
            <person name="Baquero F."/>
            <person name="Berche P."/>
            <person name="Bloecker H."/>
            <person name="Brandt P."/>
            <person name="Chakraborty T."/>
            <person name="Charbit A."/>
            <person name="Chetouani F."/>
            <person name="Couve E."/>
            <person name="de Daruvar A."/>
            <person name="Dehoux P."/>
            <person name="Domann E."/>
            <person name="Dominguez-Bernal G."/>
            <person name="Duchaud E."/>
            <person name="Durant L."/>
            <person name="Dussurget O."/>
            <person name="Entian K.-D."/>
            <person name="Fsihi H."/>
            <person name="Garcia-del Portillo F."/>
            <person name="Garrido P."/>
            <person name="Gautier L."/>
            <person name="Goebel W."/>
            <person name="Gomez-Lopez N."/>
            <person name="Hain T."/>
            <person name="Hauf J."/>
            <person name="Jackson D."/>
            <person name="Jones L.-M."/>
            <person name="Kaerst U."/>
            <person name="Kreft J."/>
            <person name="Kuhn M."/>
            <person name="Kunst F."/>
            <person name="Kurapkat G."/>
            <person name="Madueno E."/>
            <person name="Maitournam A."/>
            <person name="Mata Vicente J."/>
            <person name="Ng E."/>
            <person name="Nedjari H."/>
            <person name="Nordsiek G."/>
            <person name="Novella S."/>
            <person name="de Pablos B."/>
            <person name="Perez-Diaz J.-C."/>
            <person name="Purcell R."/>
            <person name="Remmel B."/>
            <person name="Rose M."/>
            <person name="Schlueter T."/>
            <person name="Simoes N."/>
            <person name="Tierrez A."/>
            <person name="Vazquez-Boland J.-A."/>
            <person name="Voss H."/>
            <person name="Wehland J."/>
            <person name="Cossart P."/>
        </authorList>
    </citation>
    <scope>NUCLEOTIDE SEQUENCE [LARGE SCALE GENOMIC DNA]</scope>
    <source>
        <strain>ATCC BAA-680 / CLIP 11262</strain>
    </source>
</reference>
<comment type="catalytic activity">
    <reaction evidence="1">
        <text>(S)-4-amino-5-oxopentanoate = 5-aminolevulinate</text>
        <dbReference type="Rhea" id="RHEA:14265"/>
        <dbReference type="ChEBI" id="CHEBI:57501"/>
        <dbReference type="ChEBI" id="CHEBI:356416"/>
        <dbReference type="EC" id="5.4.3.8"/>
    </reaction>
</comment>
<comment type="cofactor">
    <cofactor evidence="1">
        <name>pyridoxal 5'-phosphate</name>
        <dbReference type="ChEBI" id="CHEBI:597326"/>
    </cofactor>
</comment>
<comment type="pathway">
    <text evidence="1">Porphyrin-containing compound metabolism; protoporphyrin-IX biosynthesis; 5-aminolevulinate from L-glutamyl-tRNA(Glu): step 2/2.</text>
</comment>
<comment type="subunit">
    <text evidence="1">Homodimer.</text>
</comment>
<comment type="subcellular location">
    <subcellularLocation>
        <location evidence="1">Cytoplasm</location>
    </subcellularLocation>
</comment>
<comment type="similarity">
    <text evidence="1">Belongs to the class-III pyridoxal-phosphate-dependent aminotransferase family. HemL subfamily.</text>
</comment>
<accession>Q92AX5</accession>
<proteinExistence type="inferred from homology"/>
<feature type="chain" id="PRO_0000120420" description="Glutamate-1-semialdehyde 2,1-aminomutase 2">
    <location>
        <begin position="1"/>
        <end position="432"/>
    </location>
</feature>
<feature type="modified residue" description="N6-(pyridoxal phosphate)lysine" evidence="1">
    <location>
        <position position="268"/>
    </location>
</feature>
<organism>
    <name type="scientific">Listeria innocua serovar 6a (strain ATCC BAA-680 / CLIP 11262)</name>
    <dbReference type="NCBI Taxonomy" id="272626"/>
    <lineage>
        <taxon>Bacteria</taxon>
        <taxon>Bacillati</taxon>
        <taxon>Bacillota</taxon>
        <taxon>Bacilli</taxon>
        <taxon>Bacillales</taxon>
        <taxon>Listeriaceae</taxon>
        <taxon>Listeria</taxon>
    </lineage>
</organism>